<accession>W4VSI1</accession>
<proteinExistence type="evidence at transcript level"/>
<keyword id="KW-0165">Cleavage on pair of basic residues</keyword>
<keyword id="KW-1015">Disulfide bond</keyword>
<keyword id="KW-0872">Ion channel impairing toxin</keyword>
<keyword id="KW-0960">Knottin</keyword>
<keyword id="KW-0964">Secreted</keyword>
<keyword id="KW-0732">Signal</keyword>
<keyword id="KW-0800">Toxin</keyword>
<reference key="1">
    <citation type="journal article" date="2013" name="Toxins">
        <title>A proteomics and transcriptomics investigation of the venom from the barychelid spider Trittame loki (brush-foot trapdoor).</title>
        <authorList>
            <person name="Undheim E.A."/>
            <person name="Sunagar K."/>
            <person name="Herzig V."/>
            <person name="Kely L."/>
            <person name="Low D.H."/>
            <person name="Jackson T.N."/>
            <person name="Jones A."/>
            <person name="Kurniawan N."/>
            <person name="King G.F."/>
            <person name="Ali S.A."/>
            <person name="Antunes A."/>
            <person name="Ruder T."/>
            <person name="Fry B.G."/>
        </authorList>
    </citation>
    <scope>NUCLEOTIDE SEQUENCE [MRNA]</scope>
    <source>
        <tissue>Venom gland</tissue>
    </source>
</reference>
<protein>
    <recommendedName>
        <fullName>U17-barytoxin-Tl1d</fullName>
        <shortName>U17-BATX-Tl1d</shortName>
    </recommendedName>
    <alternativeName>
        <fullName evidence="3">Toxin ICK-38</fullName>
    </alternativeName>
</protein>
<dbReference type="EMBL" id="GAQE01000041">
    <property type="protein sequence ID" value="JAB84513.1"/>
    <property type="molecule type" value="Transcribed_RNA"/>
</dbReference>
<dbReference type="ArachnoServer" id="AS001785">
    <property type="toxin name" value="U17-barytoxin-Tl1d"/>
</dbReference>
<dbReference type="GO" id="GO:0005576">
    <property type="term" value="C:extracellular region"/>
    <property type="evidence" value="ECO:0007669"/>
    <property type="project" value="UniProtKB-SubCell"/>
</dbReference>
<dbReference type="GO" id="GO:0019871">
    <property type="term" value="F:sodium channel inhibitor activity"/>
    <property type="evidence" value="ECO:0007669"/>
    <property type="project" value="InterPro"/>
</dbReference>
<dbReference type="GO" id="GO:0090729">
    <property type="term" value="F:toxin activity"/>
    <property type="evidence" value="ECO:0007669"/>
    <property type="project" value="UniProtKB-KW"/>
</dbReference>
<dbReference type="InterPro" id="IPR012627">
    <property type="entry name" value="Toxin_22"/>
</dbReference>
<dbReference type="Pfam" id="PF08092">
    <property type="entry name" value="Toxin_22"/>
    <property type="match status" value="1"/>
</dbReference>
<feature type="signal peptide" evidence="2">
    <location>
        <begin position="1"/>
        <end position="20"/>
    </location>
</feature>
<feature type="propeptide" id="PRO_0000435161" evidence="4">
    <location>
        <begin position="21"/>
        <end position="74"/>
    </location>
</feature>
<feature type="chain" id="PRO_0000429245" description="U17-barytoxin-Tl1d">
    <location>
        <begin position="75"/>
        <end position="114"/>
    </location>
</feature>
<feature type="disulfide bond" evidence="1">
    <location>
        <begin position="75"/>
        <end position="88"/>
    </location>
</feature>
<feature type="disulfide bond" evidence="1">
    <location>
        <begin position="82"/>
        <end position="93"/>
    </location>
</feature>
<feature type="disulfide bond" evidence="1">
    <location>
        <begin position="87"/>
        <end position="108"/>
    </location>
</feature>
<name>ICK38_TRILK</name>
<sequence length="114" mass="12935">MKTIIVFLSLLVLATKFGDANEGVNQEQMKEVIQNEFREDFLNEMAAMSLLQQLEAIESTLLEKEADRNSRQKRCLGENVPCGDFPCCGKLACEKTFGYGWWYKSPFCVKPSKG</sequence>
<evidence type="ECO:0000250" key="1"/>
<evidence type="ECO:0000255" key="2"/>
<evidence type="ECO:0000303" key="3">
    <source>
    </source>
</evidence>
<evidence type="ECO:0000305" key="4"/>
<organism>
    <name type="scientific">Trittame loki</name>
    <name type="common">Brush-footed trapdoor spider</name>
    <dbReference type="NCBI Taxonomy" id="1295018"/>
    <lineage>
        <taxon>Eukaryota</taxon>
        <taxon>Metazoa</taxon>
        <taxon>Ecdysozoa</taxon>
        <taxon>Arthropoda</taxon>
        <taxon>Chelicerata</taxon>
        <taxon>Arachnida</taxon>
        <taxon>Araneae</taxon>
        <taxon>Mygalomorphae</taxon>
        <taxon>Barychelidae</taxon>
        <taxon>Trittame</taxon>
    </lineage>
</organism>
<comment type="function">
    <text evidence="4">Ion channel inhibitor.</text>
</comment>
<comment type="subcellular location">
    <subcellularLocation>
        <location evidence="1">Secreted</location>
    </subcellularLocation>
</comment>
<comment type="tissue specificity">
    <text>Expressed by the venom gland.</text>
</comment>
<comment type="domain">
    <text evidence="1">The presence of a 'disulfide through disulfide knot' structurally defines this protein as a knottin.</text>
</comment>
<comment type="similarity">
    <text evidence="4">Belongs to the neurotoxin 14 (magi-1) family. 03 (ICK-30-40) subfamily.</text>
</comment>